<keyword id="KW-0963">Cytoplasm</keyword>
<keyword id="KW-0369">Histidine metabolism</keyword>
<keyword id="KW-0456">Lyase</keyword>
<keyword id="KW-0520">NAD</keyword>
<gene>
    <name evidence="1" type="primary">hutU</name>
    <name type="ordered locus">RBAM_036420</name>
</gene>
<sequence>MTDVKKSIRAGRGTELECLGWEQEAVLRMLRNNLDPEVAEKPEDLIVYGGIGKAARNWDAFHAIERSLKMLKDDETLLIQSGKPVGLFRTHSRAPRVLLANSVLVPKWADWEHFHDLEKKGLMMYGQMTAGSWIYIGSQGILQGTYETFAELARQHFGGSLKGTLTLTAGLGGMGGAQPLSVTMNDGVVIAVEADETRIDKRIETNYCDRKTASIDEALRWAEAARQAGEPLSIGLLGNAAEVHHELLNRGVHIDIVTDQTSAHDPLIGYIPAGYSLEEADRLRRDQPELYVRLSKQSMKKHVEAMLAFKKKGAVVFDYGNNIRQAAKDEGLADAFDFPGFVPAYIRPLFCEGKGPFRWAALSGDPEDIYRTDALLKELFPENQALHRWIDMAQKKVTFQGLPSRICWLGYGEREKMGLAINELVRNGELKAPIVIGRDHLDCGSVASPNRETEAMKDGSDAVGDWAVLNALINTASGASWVSFHHGGGVGMGYSLHAGMVAVADGSILAEQRLSRVLTSDPGMGIIRHADAGYEKAAQVAEEQDIMIPMKKER</sequence>
<organism>
    <name type="scientific">Bacillus velezensis (strain DSM 23117 / BGSC 10A6 / LMG 26770 / FZB42)</name>
    <name type="common">Bacillus amyloliquefaciens subsp. plantarum</name>
    <dbReference type="NCBI Taxonomy" id="326423"/>
    <lineage>
        <taxon>Bacteria</taxon>
        <taxon>Bacillati</taxon>
        <taxon>Bacillota</taxon>
        <taxon>Bacilli</taxon>
        <taxon>Bacillales</taxon>
        <taxon>Bacillaceae</taxon>
        <taxon>Bacillus</taxon>
        <taxon>Bacillus amyloliquefaciens group</taxon>
    </lineage>
</organism>
<feature type="chain" id="PRO_1000025115" description="Urocanate hydratase">
    <location>
        <begin position="1"/>
        <end position="554"/>
    </location>
</feature>
<feature type="active site" evidence="1">
    <location>
        <position position="407"/>
    </location>
</feature>
<feature type="binding site" evidence="1">
    <location>
        <begin position="49"/>
        <end position="50"/>
    </location>
    <ligand>
        <name>NAD(+)</name>
        <dbReference type="ChEBI" id="CHEBI:57540"/>
    </ligand>
</feature>
<feature type="binding site" evidence="1">
    <location>
        <position position="127"/>
    </location>
    <ligand>
        <name>NAD(+)</name>
        <dbReference type="ChEBI" id="CHEBI:57540"/>
    </ligand>
</feature>
<feature type="binding site" evidence="1">
    <location>
        <begin position="173"/>
        <end position="175"/>
    </location>
    <ligand>
        <name>NAD(+)</name>
        <dbReference type="ChEBI" id="CHEBI:57540"/>
    </ligand>
</feature>
<feature type="binding site" evidence="1">
    <location>
        <position position="193"/>
    </location>
    <ligand>
        <name>NAD(+)</name>
        <dbReference type="ChEBI" id="CHEBI:57540"/>
    </ligand>
</feature>
<feature type="binding site" evidence="1">
    <location>
        <position position="198"/>
    </location>
    <ligand>
        <name>NAD(+)</name>
        <dbReference type="ChEBI" id="CHEBI:57540"/>
    </ligand>
</feature>
<feature type="binding site" evidence="1">
    <location>
        <begin position="239"/>
        <end position="240"/>
    </location>
    <ligand>
        <name>NAD(+)</name>
        <dbReference type="ChEBI" id="CHEBI:57540"/>
    </ligand>
</feature>
<feature type="binding site" evidence="1">
    <location>
        <begin position="260"/>
        <end position="264"/>
    </location>
    <ligand>
        <name>NAD(+)</name>
        <dbReference type="ChEBI" id="CHEBI:57540"/>
    </ligand>
</feature>
<feature type="binding site" evidence="1">
    <location>
        <begin position="270"/>
        <end position="271"/>
    </location>
    <ligand>
        <name>NAD(+)</name>
        <dbReference type="ChEBI" id="CHEBI:57540"/>
    </ligand>
</feature>
<feature type="binding site" evidence="1">
    <location>
        <position position="319"/>
    </location>
    <ligand>
        <name>NAD(+)</name>
        <dbReference type="ChEBI" id="CHEBI:57540"/>
    </ligand>
</feature>
<feature type="binding site" evidence="1">
    <location>
        <position position="489"/>
    </location>
    <ligand>
        <name>NAD(+)</name>
        <dbReference type="ChEBI" id="CHEBI:57540"/>
    </ligand>
</feature>
<reference key="1">
    <citation type="journal article" date="2007" name="Nat. Biotechnol.">
        <title>Comparative analysis of the complete genome sequence of the plant growth-promoting bacterium Bacillus amyloliquefaciens FZB42.</title>
        <authorList>
            <person name="Chen X.H."/>
            <person name="Koumoutsi A."/>
            <person name="Scholz R."/>
            <person name="Eisenreich A."/>
            <person name="Schneider K."/>
            <person name="Heinemeyer I."/>
            <person name="Morgenstern B."/>
            <person name="Voss B."/>
            <person name="Hess W.R."/>
            <person name="Reva O."/>
            <person name="Junge H."/>
            <person name="Voigt B."/>
            <person name="Jungblut P.R."/>
            <person name="Vater J."/>
            <person name="Suessmuth R."/>
            <person name="Liesegang H."/>
            <person name="Strittmatter A."/>
            <person name="Gottschalk G."/>
            <person name="Borriss R."/>
        </authorList>
    </citation>
    <scope>NUCLEOTIDE SEQUENCE [LARGE SCALE GENOMIC DNA]</scope>
    <source>
        <strain>DSM 23117 / BGSC 10A6 / LMG 26770 / FZB42</strain>
    </source>
</reference>
<comment type="function">
    <text evidence="1">Catalyzes the conversion of urocanate to 4-imidazolone-5-propionate.</text>
</comment>
<comment type="catalytic activity">
    <reaction evidence="1">
        <text>4-imidazolone-5-propanoate = trans-urocanate + H2O</text>
        <dbReference type="Rhea" id="RHEA:13101"/>
        <dbReference type="ChEBI" id="CHEBI:15377"/>
        <dbReference type="ChEBI" id="CHEBI:17771"/>
        <dbReference type="ChEBI" id="CHEBI:77893"/>
        <dbReference type="EC" id="4.2.1.49"/>
    </reaction>
</comment>
<comment type="cofactor">
    <cofactor evidence="1">
        <name>NAD(+)</name>
        <dbReference type="ChEBI" id="CHEBI:57540"/>
    </cofactor>
    <text evidence="1">Binds 1 NAD(+) per subunit.</text>
</comment>
<comment type="pathway">
    <text evidence="1">Amino-acid degradation; L-histidine degradation into L-glutamate; N-formimidoyl-L-glutamate from L-histidine: step 2/3.</text>
</comment>
<comment type="subcellular location">
    <subcellularLocation>
        <location evidence="1">Cytoplasm</location>
    </subcellularLocation>
</comment>
<comment type="similarity">
    <text evidence="1">Belongs to the urocanase family.</text>
</comment>
<dbReference type="EC" id="4.2.1.49" evidence="1"/>
<dbReference type="EMBL" id="CP000560">
    <property type="protein sequence ID" value="ABS75971.1"/>
    <property type="molecule type" value="Genomic_DNA"/>
</dbReference>
<dbReference type="RefSeq" id="WP_012118819.1">
    <property type="nucleotide sequence ID" value="NC_009725.2"/>
</dbReference>
<dbReference type="SMR" id="A7ZAE5"/>
<dbReference type="GeneID" id="93082782"/>
<dbReference type="KEGG" id="bay:RBAM_036420"/>
<dbReference type="HOGENOM" id="CLU_018868_0_1_9"/>
<dbReference type="UniPathway" id="UPA00379">
    <property type="reaction ID" value="UER00550"/>
</dbReference>
<dbReference type="Proteomes" id="UP000001120">
    <property type="component" value="Chromosome"/>
</dbReference>
<dbReference type="GO" id="GO:0005737">
    <property type="term" value="C:cytoplasm"/>
    <property type="evidence" value="ECO:0007669"/>
    <property type="project" value="UniProtKB-SubCell"/>
</dbReference>
<dbReference type="GO" id="GO:0016153">
    <property type="term" value="F:urocanate hydratase activity"/>
    <property type="evidence" value="ECO:0007669"/>
    <property type="project" value="UniProtKB-UniRule"/>
</dbReference>
<dbReference type="GO" id="GO:0019556">
    <property type="term" value="P:L-histidine catabolic process to glutamate and formamide"/>
    <property type="evidence" value="ECO:0007669"/>
    <property type="project" value="UniProtKB-UniPathway"/>
</dbReference>
<dbReference type="GO" id="GO:0019557">
    <property type="term" value="P:L-histidine catabolic process to glutamate and formate"/>
    <property type="evidence" value="ECO:0007669"/>
    <property type="project" value="UniProtKB-UniPathway"/>
</dbReference>
<dbReference type="FunFam" id="3.40.50.10730:FF:000001">
    <property type="entry name" value="Urocanate hydratase"/>
    <property type="match status" value="1"/>
</dbReference>
<dbReference type="Gene3D" id="3.40.50.10730">
    <property type="entry name" value="Urocanase like domains"/>
    <property type="match status" value="1"/>
</dbReference>
<dbReference type="Gene3D" id="3.40.1770.10">
    <property type="entry name" value="Urocanase superfamily"/>
    <property type="match status" value="1"/>
</dbReference>
<dbReference type="HAMAP" id="MF_00577">
    <property type="entry name" value="HutU"/>
    <property type="match status" value="1"/>
</dbReference>
<dbReference type="InterPro" id="IPR055351">
    <property type="entry name" value="Urocanase"/>
</dbReference>
<dbReference type="InterPro" id="IPR023637">
    <property type="entry name" value="Urocanase-like"/>
</dbReference>
<dbReference type="InterPro" id="IPR035401">
    <property type="entry name" value="Urocanase_C"/>
</dbReference>
<dbReference type="InterPro" id="IPR038364">
    <property type="entry name" value="Urocanase_central_sf"/>
</dbReference>
<dbReference type="InterPro" id="IPR023636">
    <property type="entry name" value="Urocanase_CS"/>
</dbReference>
<dbReference type="InterPro" id="IPR035400">
    <property type="entry name" value="Urocanase_N"/>
</dbReference>
<dbReference type="InterPro" id="IPR035085">
    <property type="entry name" value="Urocanase_Rossmann-like"/>
</dbReference>
<dbReference type="InterPro" id="IPR036190">
    <property type="entry name" value="Urocanase_sf"/>
</dbReference>
<dbReference type="NCBIfam" id="TIGR01228">
    <property type="entry name" value="hutU"/>
    <property type="match status" value="1"/>
</dbReference>
<dbReference type="NCBIfam" id="NF003820">
    <property type="entry name" value="PRK05414.1"/>
    <property type="match status" value="1"/>
</dbReference>
<dbReference type="PANTHER" id="PTHR12216">
    <property type="entry name" value="UROCANATE HYDRATASE"/>
    <property type="match status" value="1"/>
</dbReference>
<dbReference type="PANTHER" id="PTHR12216:SF4">
    <property type="entry name" value="UROCANATE HYDRATASE"/>
    <property type="match status" value="1"/>
</dbReference>
<dbReference type="Pfam" id="PF01175">
    <property type="entry name" value="Urocanase"/>
    <property type="match status" value="1"/>
</dbReference>
<dbReference type="Pfam" id="PF17392">
    <property type="entry name" value="Urocanase_C"/>
    <property type="match status" value="1"/>
</dbReference>
<dbReference type="Pfam" id="PF17391">
    <property type="entry name" value="Urocanase_N"/>
    <property type="match status" value="1"/>
</dbReference>
<dbReference type="PIRSF" id="PIRSF001423">
    <property type="entry name" value="Urocanate_hydrat"/>
    <property type="match status" value="1"/>
</dbReference>
<dbReference type="SUPFAM" id="SSF111326">
    <property type="entry name" value="Urocanase"/>
    <property type="match status" value="1"/>
</dbReference>
<dbReference type="PROSITE" id="PS01233">
    <property type="entry name" value="UROCANASE"/>
    <property type="match status" value="1"/>
</dbReference>
<name>HUTU_BACVZ</name>
<evidence type="ECO:0000255" key="1">
    <source>
        <dbReference type="HAMAP-Rule" id="MF_00577"/>
    </source>
</evidence>
<accession>A7ZAE5</accession>
<protein>
    <recommendedName>
        <fullName evidence="1">Urocanate hydratase</fullName>
        <shortName evidence="1">Urocanase</shortName>
        <ecNumber evidence="1">4.2.1.49</ecNumber>
    </recommendedName>
    <alternativeName>
        <fullName evidence="1">Imidazolonepropionate hydrolase</fullName>
    </alternativeName>
</protein>
<proteinExistence type="inferred from homology"/>